<dbReference type="EC" id="2.1.1.-" evidence="1"/>
<dbReference type="EC" id="2.1.1.35" evidence="1"/>
<dbReference type="EMBL" id="CP000792">
    <property type="protein sequence ID" value="EAT98277.1"/>
    <property type="molecule type" value="Genomic_DNA"/>
</dbReference>
<dbReference type="RefSeq" id="WP_012139894.1">
    <property type="nucleotide sequence ID" value="NC_009802.2"/>
</dbReference>
<dbReference type="SMR" id="A7ZDV3"/>
<dbReference type="STRING" id="360104.CCC13826_1404"/>
<dbReference type="KEGG" id="cco:CCC13826_1404"/>
<dbReference type="eggNOG" id="COG2265">
    <property type="taxonomic scope" value="Bacteria"/>
</dbReference>
<dbReference type="HOGENOM" id="CLU_043022_0_0_7"/>
<dbReference type="OrthoDB" id="9804590at2"/>
<dbReference type="Proteomes" id="UP000001121">
    <property type="component" value="Chromosome"/>
</dbReference>
<dbReference type="GO" id="GO:0005829">
    <property type="term" value="C:cytosol"/>
    <property type="evidence" value="ECO:0007669"/>
    <property type="project" value="TreeGrafter"/>
</dbReference>
<dbReference type="GO" id="GO:0019843">
    <property type="term" value="F:rRNA binding"/>
    <property type="evidence" value="ECO:0007669"/>
    <property type="project" value="TreeGrafter"/>
</dbReference>
<dbReference type="GO" id="GO:0030697">
    <property type="term" value="F:tRNA (uracil(54)-C5)-methyltransferase activity, S-adenosyl methionine-dependent"/>
    <property type="evidence" value="ECO:0007669"/>
    <property type="project" value="UniProtKB-EC"/>
</dbReference>
<dbReference type="GO" id="GO:0000049">
    <property type="term" value="F:tRNA binding"/>
    <property type="evidence" value="ECO:0007669"/>
    <property type="project" value="TreeGrafter"/>
</dbReference>
<dbReference type="GO" id="GO:0032259">
    <property type="term" value="P:methylation"/>
    <property type="evidence" value="ECO:0007669"/>
    <property type="project" value="UniProtKB-KW"/>
</dbReference>
<dbReference type="GO" id="GO:0008033">
    <property type="term" value="P:tRNA processing"/>
    <property type="evidence" value="ECO:0007669"/>
    <property type="project" value="UniProtKB-KW"/>
</dbReference>
<dbReference type="CDD" id="cd02440">
    <property type="entry name" value="AdoMet_MTases"/>
    <property type="match status" value="1"/>
</dbReference>
<dbReference type="FunFam" id="3.40.50.150:FF:000012">
    <property type="entry name" value="tRNA/tmRNA (uracil-C(5))-methyltransferase"/>
    <property type="match status" value="1"/>
</dbReference>
<dbReference type="Gene3D" id="2.40.50.1070">
    <property type="match status" value="1"/>
</dbReference>
<dbReference type="Gene3D" id="3.40.50.150">
    <property type="entry name" value="Vaccinia Virus protein VP39"/>
    <property type="match status" value="1"/>
</dbReference>
<dbReference type="HAMAP" id="MF_01011">
    <property type="entry name" value="RNA_methyltr_TrmA"/>
    <property type="match status" value="1"/>
</dbReference>
<dbReference type="InterPro" id="IPR030390">
    <property type="entry name" value="MeTrfase_TrmA_AS"/>
</dbReference>
<dbReference type="InterPro" id="IPR029063">
    <property type="entry name" value="SAM-dependent_MTases_sf"/>
</dbReference>
<dbReference type="InterPro" id="IPR011869">
    <property type="entry name" value="TrmA_MeTrfase"/>
</dbReference>
<dbReference type="InterPro" id="IPR010280">
    <property type="entry name" value="U5_MeTrfase_fam"/>
</dbReference>
<dbReference type="NCBIfam" id="TIGR02143">
    <property type="entry name" value="trmA_only"/>
    <property type="match status" value="1"/>
</dbReference>
<dbReference type="PANTHER" id="PTHR47790">
    <property type="entry name" value="TRNA/TMRNA (URACIL-C(5))-METHYLTRANSFERASE"/>
    <property type="match status" value="1"/>
</dbReference>
<dbReference type="PANTHER" id="PTHR47790:SF2">
    <property type="entry name" value="TRNA_TMRNA (URACIL-C(5))-METHYLTRANSFERASE"/>
    <property type="match status" value="1"/>
</dbReference>
<dbReference type="Pfam" id="PF05958">
    <property type="entry name" value="tRNA_U5-meth_tr"/>
    <property type="match status" value="1"/>
</dbReference>
<dbReference type="SUPFAM" id="SSF53335">
    <property type="entry name" value="S-adenosyl-L-methionine-dependent methyltransferases"/>
    <property type="match status" value="1"/>
</dbReference>
<dbReference type="PROSITE" id="PS51687">
    <property type="entry name" value="SAM_MT_RNA_M5U"/>
    <property type="match status" value="1"/>
</dbReference>
<dbReference type="PROSITE" id="PS01230">
    <property type="entry name" value="TRMA_1"/>
    <property type="match status" value="1"/>
</dbReference>
<proteinExistence type="inferred from homology"/>
<name>TRMA_CAMC1</name>
<organism>
    <name type="scientific">Campylobacter concisus (strain 13826)</name>
    <dbReference type="NCBI Taxonomy" id="360104"/>
    <lineage>
        <taxon>Bacteria</taxon>
        <taxon>Pseudomonadati</taxon>
        <taxon>Campylobacterota</taxon>
        <taxon>Epsilonproteobacteria</taxon>
        <taxon>Campylobacterales</taxon>
        <taxon>Campylobacteraceae</taxon>
        <taxon>Campylobacter</taxon>
    </lineage>
</organism>
<reference key="1">
    <citation type="submission" date="2007-10" db="EMBL/GenBank/DDBJ databases">
        <title>Genome sequence of Campylobacter concisus 13826 isolated from human feces.</title>
        <authorList>
            <person name="Fouts D.E."/>
            <person name="Mongodin E.F."/>
            <person name="Puiu D."/>
            <person name="Sebastian Y."/>
            <person name="Miller W.G."/>
            <person name="Mandrell R.E."/>
            <person name="On S."/>
            <person name="Nelson K.E."/>
        </authorList>
    </citation>
    <scope>NUCLEOTIDE SEQUENCE [LARGE SCALE GENOMIC DNA]</scope>
    <source>
        <strain>13826</strain>
    </source>
</reference>
<comment type="function">
    <text evidence="1">Dual-specificity methyltransferase that catalyzes the formation of 5-methyluridine at position 54 (m5U54) in all tRNAs, and that of position 341 (m5U341) in tmRNA (transfer-mRNA).</text>
</comment>
<comment type="catalytic activity">
    <reaction evidence="1">
        <text>uridine(54) in tRNA + S-adenosyl-L-methionine = 5-methyluridine(54) in tRNA + S-adenosyl-L-homocysteine + H(+)</text>
        <dbReference type="Rhea" id="RHEA:42712"/>
        <dbReference type="Rhea" id="RHEA-COMP:10167"/>
        <dbReference type="Rhea" id="RHEA-COMP:10193"/>
        <dbReference type="ChEBI" id="CHEBI:15378"/>
        <dbReference type="ChEBI" id="CHEBI:57856"/>
        <dbReference type="ChEBI" id="CHEBI:59789"/>
        <dbReference type="ChEBI" id="CHEBI:65315"/>
        <dbReference type="ChEBI" id="CHEBI:74447"/>
        <dbReference type="EC" id="2.1.1.35"/>
    </reaction>
</comment>
<comment type="catalytic activity">
    <reaction evidence="1">
        <text>uridine(341) in tmRNA + S-adenosyl-L-methionine = 5-methyluridine(341) in tmRNA + S-adenosyl-L-homocysteine + H(+)</text>
        <dbReference type="Rhea" id="RHEA:43612"/>
        <dbReference type="Rhea" id="RHEA-COMP:10630"/>
        <dbReference type="Rhea" id="RHEA-COMP:10631"/>
        <dbReference type="ChEBI" id="CHEBI:15378"/>
        <dbReference type="ChEBI" id="CHEBI:57856"/>
        <dbReference type="ChEBI" id="CHEBI:59789"/>
        <dbReference type="ChEBI" id="CHEBI:65315"/>
        <dbReference type="ChEBI" id="CHEBI:74447"/>
    </reaction>
</comment>
<comment type="similarity">
    <text evidence="1">Belongs to the class I-like SAM-binding methyltransferase superfamily. RNA M5U methyltransferase family. TrmA subfamily.</text>
</comment>
<keyword id="KW-0489">Methyltransferase</keyword>
<keyword id="KW-0949">S-adenosyl-L-methionine</keyword>
<keyword id="KW-0808">Transferase</keyword>
<keyword id="KW-0819">tRNA processing</keyword>
<feature type="chain" id="PRO_1000198536" description="tRNA/tmRNA (uracil-C(5))-methyltransferase">
    <location>
        <begin position="1"/>
        <end position="367"/>
    </location>
</feature>
<feature type="active site" description="Nucleophile" evidence="1">
    <location>
        <position position="324"/>
    </location>
</feature>
<feature type="active site" description="Proton acceptor" evidence="1">
    <location>
        <position position="358"/>
    </location>
</feature>
<feature type="binding site" evidence="1">
    <location>
        <position position="191"/>
    </location>
    <ligand>
        <name>S-adenosyl-L-methionine</name>
        <dbReference type="ChEBI" id="CHEBI:59789"/>
    </ligand>
</feature>
<feature type="binding site" evidence="1">
    <location>
        <position position="218"/>
    </location>
    <ligand>
        <name>S-adenosyl-L-methionine</name>
        <dbReference type="ChEBI" id="CHEBI:59789"/>
    </ligand>
</feature>
<feature type="binding site" evidence="1">
    <location>
        <position position="223"/>
    </location>
    <ligand>
        <name>S-adenosyl-L-methionine</name>
        <dbReference type="ChEBI" id="CHEBI:59789"/>
    </ligand>
</feature>
<feature type="binding site" evidence="1">
    <location>
        <position position="239"/>
    </location>
    <ligand>
        <name>S-adenosyl-L-methionine</name>
        <dbReference type="ChEBI" id="CHEBI:59789"/>
    </ligand>
</feature>
<feature type="binding site" evidence="1">
    <location>
        <position position="299"/>
    </location>
    <ligand>
        <name>S-adenosyl-L-methionine</name>
        <dbReference type="ChEBI" id="CHEBI:59789"/>
    </ligand>
</feature>
<gene>
    <name evidence="1" type="primary">trmA</name>
    <name type="ordered locus">Ccon26_11030</name>
    <name type="ORF">CCC13826_1404</name>
</gene>
<accession>A7ZDV3</accession>
<evidence type="ECO:0000255" key="1">
    <source>
        <dbReference type="HAMAP-Rule" id="MF_01011"/>
    </source>
</evidence>
<sequence length="367" mass="41782">MDCKYLKECGSCTLFTSYSEQISFKTDLIKQNFSHFYDGKFDLFSSSPKHYRTRAEFGIWHEGSKLSYTMHASEKGKKVFIDECPKVCEQISHLMPRLLESLQDDEILRTKLFGVEFIACKSGTLVTLLYHKKLDSEFEAAMKILASKLDVMILARSRGQKLLSGELNLVDELNVDGQIYKFSLSENAFIQPNKAVNEKMIAWAKECVQSGADLLELYCGHGNFTIPLSFKFKNVLATEISKSSIANALKNCELNGVENIKFLRMDADELMSAFAGVREFNRLKDIKLSDFNFSHVLVDPPRAGLSESVINFIRNFKNIIYISCNPETLKENLNELTKSHKVIKFALFDQFANTHHIECGVLLEAKR</sequence>
<protein>
    <recommendedName>
        <fullName evidence="1">tRNA/tmRNA (uracil-C(5))-methyltransferase</fullName>
        <ecNumber evidence="1">2.1.1.-</ecNumber>
        <ecNumber evidence="1">2.1.1.35</ecNumber>
    </recommendedName>
    <alternativeName>
        <fullName evidence="1">tRNA (uracil(54)-C(5))-methyltransferase</fullName>
    </alternativeName>
    <alternativeName>
        <fullName evidence="1">tRNA(m5U54)-methyltransferase</fullName>
        <shortName evidence="1">RUMT</shortName>
    </alternativeName>
    <alternativeName>
        <fullName evidence="1">tmRNA (uracil(341)-C(5))-methyltransferase</fullName>
    </alternativeName>
</protein>